<dbReference type="EC" id="3.1.-.-" evidence="3"/>
<dbReference type="EMBL" id="D63339">
    <property type="protein sequence ID" value="BAA09657.1"/>
    <property type="molecule type" value="mRNA"/>
</dbReference>
<dbReference type="SMR" id="Q90385"/>
<dbReference type="MEROPS" id="C46.002"/>
<dbReference type="GO" id="GO:0005789">
    <property type="term" value="C:endoplasmic reticulum membrane"/>
    <property type="evidence" value="ECO:0007669"/>
    <property type="project" value="UniProtKB-SubCell"/>
</dbReference>
<dbReference type="GO" id="GO:0005615">
    <property type="term" value="C:extracellular space"/>
    <property type="evidence" value="ECO:0007669"/>
    <property type="project" value="TreeGrafter"/>
</dbReference>
<dbReference type="GO" id="GO:0000139">
    <property type="term" value="C:Golgi membrane"/>
    <property type="evidence" value="ECO:0007669"/>
    <property type="project" value="UniProtKB-SubCell"/>
</dbReference>
<dbReference type="GO" id="GO:0005886">
    <property type="term" value="C:plasma membrane"/>
    <property type="evidence" value="ECO:0007669"/>
    <property type="project" value="UniProtKB-SubCell"/>
</dbReference>
<dbReference type="GO" id="GO:0005509">
    <property type="term" value="F:calcium ion binding"/>
    <property type="evidence" value="ECO:0007669"/>
    <property type="project" value="TreeGrafter"/>
</dbReference>
<dbReference type="GO" id="GO:0140853">
    <property type="term" value="F:cholesterol-protein transferase activity"/>
    <property type="evidence" value="ECO:0000250"/>
    <property type="project" value="UniProtKB"/>
</dbReference>
<dbReference type="GO" id="GO:0005113">
    <property type="term" value="F:patched binding"/>
    <property type="evidence" value="ECO:0007669"/>
    <property type="project" value="TreeGrafter"/>
</dbReference>
<dbReference type="GO" id="GO:0008233">
    <property type="term" value="F:peptidase activity"/>
    <property type="evidence" value="ECO:0000250"/>
    <property type="project" value="UniProtKB"/>
</dbReference>
<dbReference type="GO" id="GO:0048513">
    <property type="term" value="P:animal organ development"/>
    <property type="evidence" value="ECO:0007669"/>
    <property type="project" value="UniProtKB-ARBA"/>
</dbReference>
<dbReference type="GO" id="GO:0048468">
    <property type="term" value="P:cell development"/>
    <property type="evidence" value="ECO:0007669"/>
    <property type="project" value="UniProtKB-ARBA"/>
</dbReference>
<dbReference type="GO" id="GO:0001708">
    <property type="term" value="P:cell fate specification"/>
    <property type="evidence" value="ECO:0007669"/>
    <property type="project" value="TreeGrafter"/>
</dbReference>
<dbReference type="GO" id="GO:0007267">
    <property type="term" value="P:cell-cell signaling"/>
    <property type="evidence" value="ECO:0007669"/>
    <property type="project" value="InterPro"/>
</dbReference>
<dbReference type="GO" id="GO:0007417">
    <property type="term" value="P:central nervous system development"/>
    <property type="evidence" value="ECO:0007669"/>
    <property type="project" value="UniProtKB-ARBA"/>
</dbReference>
<dbReference type="GO" id="GO:0016539">
    <property type="term" value="P:intein-mediated protein splicing"/>
    <property type="evidence" value="ECO:0007669"/>
    <property type="project" value="InterPro"/>
</dbReference>
<dbReference type="GO" id="GO:0030182">
    <property type="term" value="P:neuron differentiation"/>
    <property type="evidence" value="ECO:0007669"/>
    <property type="project" value="UniProtKB-ARBA"/>
</dbReference>
<dbReference type="GO" id="GO:0007389">
    <property type="term" value="P:pattern specification process"/>
    <property type="evidence" value="ECO:0007669"/>
    <property type="project" value="UniProtKB-ARBA"/>
</dbReference>
<dbReference type="GO" id="GO:0045880">
    <property type="term" value="P:positive regulation of smoothened signaling pathway"/>
    <property type="evidence" value="ECO:0000250"/>
    <property type="project" value="UniProtKB"/>
</dbReference>
<dbReference type="GO" id="GO:0016540">
    <property type="term" value="P:protein autoprocessing"/>
    <property type="evidence" value="ECO:0007669"/>
    <property type="project" value="InterPro"/>
</dbReference>
<dbReference type="GO" id="GO:0042127">
    <property type="term" value="P:regulation of cell population proliferation"/>
    <property type="evidence" value="ECO:0007669"/>
    <property type="project" value="UniProtKB-ARBA"/>
</dbReference>
<dbReference type="GO" id="GO:0050793">
    <property type="term" value="P:regulation of developmental process"/>
    <property type="evidence" value="ECO:0007669"/>
    <property type="project" value="UniProtKB-ARBA"/>
</dbReference>
<dbReference type="GO" id="GO:0010468">
    <property type="term" value="P:regulation of gene expression"/>
    <property type="evidence" value="ECO:0007669"/>
    <property type="project" value="TreeGrafter"/>
</dbReference>
<dbReference type="GO" id="GO:0097264">
    <property type="term" value="P:self proteolysis"/>
    <property type="evidence" value="ECO:0000250"/>
    <property type="project" value="UniProtKB"/>
</dbReference>
<dbReference type="GO" id="GO:0007224">
    <property type="term" value="P:smoothened signaling pathway"/>
    <property type="evidence" value="ECO:0007669"/>
    <property type="project" value="TreeGrafter"/>
</dbReference>
<dbReference type="GO" id="GO:0009888">
    <property type="term" value="P:tissue development"/>
    <property type="evidence" value="ECO:0007669"/>
    <property type="project" value="UniProtKB-ARBA"/>
</dbReference>
<dbReference type="GO" id="GO:0035295">
    <property type="term" value="P:tube development"/>
    <property type="evidence" value="ECO:0007669"/>
    <property type="project" value="UniProtKB-ARBA"/>
</dbReference>
<dbReference type="CDD" id="cd00081">
    <property type="entry name" value="Hint"/>
    <property type="match status" value="1"/>
</dbReference>
<dbReference type="FunFam" id="2.170.16.10:FF:000001">
    <property type="entry name" value="Indian hedgehog"/>
    <property type="match status" value="1"/>
</dbReference>
<dbReference type="FunFam" id="3.30.1380.10:FF:000001">
    <property type="entry name" value="Indian hedgehog"/>
    <property type="match status" value="1"/>
</dbReference>
<dbReference type="Gene3D" id="3.30.1380.10">
    <property type="match status" value="1"/>
</dbReference>
<dbReference type="Gene3D" id="2.170.16.10">
    <property type="entry name" value="Hedgehog/Intein (Hint) domain"/>
    <property type="match status" value="1"/>
</dbReference>
<dbReference type="InterPro" id="IPR001657">
    <property type="entry name" value="Hedgehog"/>
</dbReference>
<dbReference type="InterPro" id="IPR001767">
    <property type="entry name" value="Hedgehog_Hint"/>
</dbReference>
<dbReference type="InterPro" id="IPR009045">
    <property type="entry name" value="Hedgehog_sig/DD-Pept_Zn-bd_sf"/>
</dbReference>
<dbReference type="InterPro" id="IPR050387">
    <property type="entry name" value="Hedgehog_Signaling"/>
</dbReference>
<dbReference type="InterPro" id="IPR000320">
    <property type="entry name" value="Hedgehog_signalling_dom"/>
</dbReference>
<dbReference type="InterPro" id="IPR003586">
    <property type="entry name" value="Hint_dom_C"/>
</dbReference>
<dbReference type="InterPro" id="IPR003587">
    <property type="entry name" value="Hint_dom_N"/>
</dbReference>
<dbReference type="InterPro" id="IPR036844">
    <property type="entry name" value="Hint_dom_sf"/>
</dbReference>
<dbReference type="InterPro" id="IPR006141">
    <property type="entry name" value="Intein_N"/>
</dbReference>
<dbReference type="PANTHER" id="PTHR11889">
    <property type="entry name" value="HEDGEHOG"/>
    <property type="match status" value="1"/>
</dbReference>
<dbReference type="PANTHER" id="PTHR11889:SF36">
    <property type="entry name" value="SONIC HEDGEHOG PROTEIN"/>
    <property type="match status" value="1"/>
</dbReference>
<dbReference type="Pfam" id="PF01085">
    <property type="entry name" value="HH_signal"/>
    <property type="match status" value="1"/>
</dbReference>
<dbReference type="Pfam" id="PF01079">
    <property type="entry name" value="Hint"/>
    <property type="match status" value="1"/>
</dbReference>
<dbReference type="PIRSF" id="PIRSF009400">
    <property type="entry name" value="Peptidase_C46"/>
    <property type="match status" value="1"/>
</dbReference>
<dbReference type="PRINTS" id="PR00632">
    <property type="entry name" value="SONICHHOG"/>
</dbReference>
<dbReference type="SMART" id="SM00305">
    <property type="entry name" value="HintC"/>
    <property type="match status" value="1"/>
</dbReference>
<dbReference type="SMART" id="SM00306">
    <property type="entry name" value="HintN"/>
    <property type="match status" value="1"/>
</dbReference>
<dbReference type="SUPFAM" id="SSF55166">
    <property type="entry name" value="Hedgehog/DD-peptidase"/>
    <property type="match status" value="1"/>
</dbReference>
<dbReference type="SUPFAM" id="SSF51294">
    <property type="entry name" value="Hedgehog/intein (Hint) domain"/>
    <property type="match status" value="1"/>
</dbReference>
<dbReference type="PROSITE" id="PS50817">
    <property type="entry name" value="INTEIN_N_TER"/>
    <property type="match status" value="1"/>
</dbReference>
<sequence>MDEMILLRRVLLAGFICALLVPSGLSCGPGRGIGTRKRFKKLTPLAYKQFTPNVPEKTLGASGRYEGKITRNSERFKELTPNYNPDIIFKDEENTGADRLMTQRCKDKLNALAISVMNQWPGVKLRVTEGWDEDGHHFEESLHYEGRAVDITTSDRDRSKYGMLARLAAEAGFDWVYFESKAHIHCSVKAENSVAAKSGGCFPGSATVALEQGVRIPVKDLRPGDRVLAADGLGKLVYSDFLLFMDKEETVRKVFYVIETSRERVRLTAAHLLFVGQAHPGNDSGGDFRSVFGSAGFRSMFASSVRAGHRVLTVDREGRGLREATVERVYLEEATGAYAPVTAHGTVVIDRVLASCYAVIEEHSWAHWAFAPLRVGLGILSFFSPQDYSSHSPPAPSQSEGVHWYSEILYRIGTWVLQEDTIHPLGMAAKSS</sequence>
<feature type="signal peptide" evidence="4">
    <location>
        <begin position="1"/>
        <end position="26"/>
    </location>
</feature>
<feature type="chain" id="PRO_0000013223" description="Sonic hedgehog protein">
    <location>
        <begin position="27"/>
        <end position="432"/>
    </location>
</feature>
<feature type="chain" id="PRO_0000013224" description="Sonic hedgehog protein N-product">
    <location>
        <begin position="27"/>
        <end position="200"/>
    </location>
</feature>
<feature type="short sequence motif" description="Cardin-Weintraub" evidence="3">
    <location>
        <begin position="35"/>
        <end position="41"/>
    </location>
</feature>
<feature type="binding site" evidence="2">
    <location>
        <position position="92"/>
    </location>
    <ligand>
        <name>Ca(2+)</name>
        <dbReference type="ChEBI" id="CHEBI:29108"/>
        <label>1</label>
    </ligand>
</feature>
<feature type="binding site" evidence="2">
    <location>
        <position position="93"/>
    </location>
    <ligand>
        <name>Ca(2+)</name>
        <dbReference type="ChEBI" id="CHEBI:29108"/>
        <label>1</label>
    </ligand>
</feature>
<feature type="binding site" evidence="2">
    <location>
        <position position="93"/>
    </location>
    <ligand>
        <name>Ca(2+)</name>
        <dbReference type="ChEBI" id="CHEBI:29108"/>
        <label>2</label>
    </ligand>
</feature>
<feature type="binding site" evidence="2">
    <location>
        <position position="98"/>
    </location>
    <ligand>
        <name>Ca(2+)</name>
        <dbReference type="ChEBI" id="CHEBI:29108"/>
        <label>1</label>
    </ligand>
</feature>
<feature type="binding site" evidence="2">
    <location>
        <position position="128"/>
    </location>
    <ligand>
        <name>Ca(2+)</name>
        <dbReference type="ChEBI" id="CHEBI:29108"/>
        <label>1</label>
    </ligand>
</feature>
<feature type="binding site" evidence="2">
    <location>
        <position position="129"/>
    </location>
    <ligand>
        <name>Ca(2+)</name>
        <dbReference type="ChEBI" id="CHEBI:29108"/>
        <label>1</label>
    </ligand>
</feature>
<feature type="binding site" evidence="2">
    <location>
        <position position="129"/>
    </location>
    <ligand>
        <name>Ca(2+)</name>
        <dbReference type="ChEBI" id="CHEBI:29108"/>
        <label>2</label>
    </ligand>
</feature>
<feature type="binding site" evidence="2">
    <location>
        <position position="132"/>
    </location>
    <ligand>
        <name>Ca(2+)</name>
        <dbReference type="ChEBI" id="CHEBI:29108"/>
        <label>2</label>
    </ligand>
</feature>
<feature type="binding site" evidence="2">
    <location>
        <position position="134"/>
    </location>
    <ligand>
        <name>Ca(2+)</name>
        <dbReference type="ChEBI" id="CHEBI:29108"/>
        <label>2</label>
    </ligand>
</feature>
<feature type="binding site" evidence="2">
    <location>
        <position position="143"/>
    </location>
    <ligand>
        <name>Zn(2+)</name>
        <dbReference type="ChEBI" id="CHEBI:29105"/>
    </ligand>
</feature>
<feature type="binding site" evidence="2">
    <location>
        <position position="150"/>
    </location>
    <ligand>
        <name>Zn(2+)</name>
        <dbReference type="ChEBI" id="CHEBI:29105"/>
    </ligand>
</feature>
<feature type="binding site" evidence="2">
    <location>
        <position position="185"/>
    </location>
    <ligand>
        <name>Zn(2+)</name>
        <dbReference type="ChEBI" id="CHEBI:29105"/>
    </ligand>
</feature>
<feature type="site" description="Cleavage; by autolysis" evidence="1">
    <location>
        <begin position="200"/>
        <end position="201"/>
    </location>
</feature>
<feature type="site" description="Involved in cholesterol transfer" evidence="1">
    <location>
        <position position="246"/>
    </location>
</feature>
<feature type="site" description="Involved in auto-cleavage" evidence="1">
    <location>
        <position position="268"/>
    </location>
</feature>
<feature type="site" description="Essential for auto-cleavage" evidence="1">
    <location>
        <position position="271"/>
    </location>
</feature>
<feature type="lipid moiety-binding region" description="N-palmitoyl cysteine" evidence="2">
    <location>
        <position position="27"/>
    </location>
</feature>
<feature type="lipid moiety-binding region" description="Cholesterol glycine ester" evidence="3">
    <location>
        <position position="200"/>
    </location>
</feature>
<proteinExistence type="evidence at transcript level"/>
<keyword id="KW-0068">Autocatalytic cleavage</keyword>
<keyword id="KW-0106">Calcium</keyword>
<keyword id="KW-1003">Cell membrane</keyword>
<keyword id="KW-0217">Developmental protein</keyword>
<keyword id="KW-0256">Endoplasmic reticulum</keyword>
<keyword id="KW-0333">Golgi apparatus</keyword>
<keyword id="KW-0378">Hydrolase</keyword>
<keyword id="KW-0449">Lipoprotein</keyword>
<keyword id="KW-0472">Membrane</keyword>
<keyword id="KW-0479">Metal-binding</keyword>
<keyword id="KW-0564">Palmitate</keyword>
<keyword id="KW-0645">Protease</keyword>
<keyword id="KW-0732">Signal</keyword>
<keyword id="KW-0808">Transferase</keyword>
<keyword id="KW-0862">Zinc</keyword>
<evidence type="ECO:0000250" key="1">
    <source>
        <dbReference type="UniProtKB" id="Q02936"/>
    </source>
</evidence>
<evidence type="ECO:0000250" key="2">
    <source>
        <dbReference type="UniProtKB" id="Q15465"/>
    </source>
</evidence>
<evidence type="ECO:0000250" key="3">
    <source>
        <dbReference type="UniProtKB" id="Q62226"/>
    </source>
</evidence>
<evidence type="ECO:0000255" key="4"/>
<evidence type="ECO:0000269" key="5">
    <source>
    </source>
</evidence>
<evidence type="ECO:0000305" key="6"/>
<reference key="1">
    <citation type="journal article" date="1996" name="Biochem. Biophys. Res. Commun.">
        <title>Activation of two Cynops genes, fork head and sonic hedgehog, in animal cap explants.</title>
        <authorList>
            <person name="Takabatake T."/>
            <person name="Takahashi T.C."/>
            <person name="Inoue K."/>
            <person name="Ogawa M."/>
            <person name="Takeshima K."/>
        </authorList>
    </citation>
    <scope>NUCLEOTIDE SEQUENCE [MRNA]</scope>
    <scope>INDUCTION</scope>
    <source>
        <tissue>Embryo</tissue>
    </source>
</reference>
<name>SHH_CYNPY</name>
<accession>Q90385</accession>
<comment type="function">
    <molecule>Sonic hedgehog protein</molecule>
    <text evidence="2 3">The C-terminal part of the sonic hedgehog protein precursor displays an autoproteolysis and a cholesterol transferase activity (By similarity). Both activities result in the cleavage of the full-length protein into two parts (ShhN and ShhC) followed by the covalent attachment of a cholesterol moiety to the C-terminal of the newly generated ShhN (By similarity). Both activities occur in the endoplasmic reticulum (By similarity). Once cleaved, ShhC is degraded in the endoplasmic reticulum (By similarity).</text>
</comment>
<comment type="function">
    <molecule>Sonic hedgehog protein N-product</molecule>
    <text evidence="2">The dually lipidated sonic hedgehog protein N-product (ShhNp) is a morphogen which is essential for a variety of patterning events during development. Induces ventral cell fate in the neural tube and somites (By similarity). Involved in the patterning of the anterior-posterior axis of the developing limb bud (By similarity). Essential for axon guidance (By similarity). Binds to the patched (PTCH1) receptor, which functions in association with smoothened (SMO), to activate the transcription of target genes (By similarity). In the absence of SHH, PTCH1 represses the constitutive signaling activity of SMO (By similarity).</text>
</comment>
<comment type="catalytic activity">
    <reaction evidence="3">
        <text>glycyl-L-cysteinyl-[protein] + cholesterol + H(+) = [protein]-C-terminal glycyl cholesterol ester + N-terminal L-cysteinyl-[protein]</text>
        <dbReference type="Rhea" id="RHEA:59504"/>
        <dbReference type="Rhea" id="RHEA-COMP:12707"/>
        <dbReference type="Rhea" id="RHEA-COMP:15369"/>
        <dbReference type="Rhea" id="RHEA-COMP:15374"/>
        <dbReference type="ChEBI" id="CHEBI:15378"/>
        <dbReference type="ChEBI" id="CHEBI:16113"/>
        <dbReference type="ChEBI" id="CHEBI:65250"/>
        <dbReference type="ChEBI" id="CHEBI:143135"/>
        <dbReference type="ChEBI" id="CHEBI:143140"/>
    </reaction>
    <physiologicalReaction direction="left-to-right" evidence="3">
        <dbReference type="Rhea" id="RHEA:59505"/>
    </physiologicalReaction>
</comment>
<comment type="subunit">
    <text evidence="2 3">Interacts with HHATL/GUP1 which negatively regulates HHAT-mediated palmitoylation of the SHH N-terminus (By similarity). Interacts with BOC and CDON (By similarity). Interacts with HHIP (By similarity). Interacts with DISP1 via its cholesterol anchor (By similarity). Interacts with SCUBE2 (By similarity).</text>
</comment>
<comment type="subunit">
    <molecule>Sonic hedgehog protein N-product</molecule>
    <text evidence="2">Multimer.</text>
</comment>
<comment type="subcellular location">
    <molecule>Sonic hedgehog protein</molecule>
    <subcellularLocation>
        <location evidence="2">Endoplasmic reticulum membrane</location>
    </subcellularLocation>
    <subcellularLocation>
        <location evidence="2">Golgi apparatus membrane</location>
    </subcellularLocation>
    <text evidence="2">Co-localizes with HHAT in the ER and Golgi membrane.</text>
</comment>
<comment type="subcellular location">
    <molecule>Sonic hedgehog protein N-product</molecule>
    <subcellularLocation>
        <location evidence="3">Cell membrane</location>
        <topology evidence="3">Lipid-anchor</topology>
    </subcellularLocation>
    <text evidence="3">The dual-lipidated sonic hedgehog protein N-product (ShhNp) is firmly tethered to the cell membrane where it forms multimers (By similarity). Further solubilization and release from the cell surface seem to be achieved through different mechanisms, including the interaction with DISP1 and SCUBE2, movement by lipoprotein particles, transport by cellular extensions called cytonemes or by the proteolytic removal of both terminal lipidated peptides.</text>
</comment>
<comment type="induction">
    <text evidence="5">Activated by activin, basic fibroblast growth factor (BFGF) and fork head.</text>
</comment>
<comment type="domain">
    <molecule>Sonic hedgehog protein N-product</molecule>
    <text evidence="3">Binds calcium and zinc ions; this stabilizes the protein fold and is essential for protein-protein interactions mediated by this domain.</text>
</comment>
<comment type="domain">
    <molecule>Sonic hedgehog protein N-product</molecule>
    <text evidence="3">The Cardin-Weintraub (CW) motif is required for heparan sulfate binding of the solubilized ShhNp (By similarity). The N-terminal palmitoylated peptide is cleaved at the Heparan sulfate-binding Cardin-Weintraub (CW) motif site (By similarity). The cleavage reduced the interactions with heparan sulfate. The cleavage is enhanced by SCUBE2 (By similarity).</text>
</comment>
<comment type="PTM">
    <molecule>Sonic hedgehog protein</molecule>
    <text evidence="3">The C-terminal domain displays an autoproteolysis activity and a cholesterol transferase activity (By similarity). Both activities result in the cleavage of the full-length protein and covalent attachment of a cholesterol moiety to the C-terminal of the newly generated N-terminal fragment (ShhN) (By similarity). Cholesterylation is required for the sonic hedgehog protein N-product targeting to lipid rafts and multimerization (By similarity). ShhN is the active species in both local and long-range signaling, whereas the C-product (ShhC) is degraded in the reticulum endoplasmic (By similarity).</text>
</comment>
<comment type="PTM">
    <molecule>Sonic hedgehog protein N-product</molecule>
    <text evidence="3">N-palmitoylation by HHAT of ShhN is required for sonic hedgehog protein N-product multimerization and full activity (By similarity). It is a prerequisite for the membrane-proximal positioning and the subsequent shedding of this N-terminal peptide (By similarity).</text>
</comment>
<comment type="PTM">
    <molecule>Sonic hedgehog protein N-product</molecule>
    <text evidence="3">The lipidated N- and C-terminal peptides of ShhNp can be cleaved (shedding) (By similarity). The N-terminal palmitoylated peptide is cleaved at the Cardin-Weintraub (CW) motif site (By similarity). The cleavage reduced the interactions with heparan sulfate (By similarity). The cleavage is enhanced by SCUBE2 (By similarity).</text>
</comment>
<comment type="similarity">
    <text evidence="6">Belongs to the hedgehog family.</text>
</comment>
<comment type="caution">
    <text evidence="3">The several steps and mechanisms that permit controlled Shh dispersion and gradient formation remain controversial. The ShhNC C-terminal domain displays an autoproteolysis activity and a cholesterol transferase activity resulting in the cleavage and covalent attachment of a cholesterol moiety to the C-terminal of the newly generated N-terminal fragment (ShhN). The protein is further modified by covalent addition of palmitate at the N-terminal of ShhN, resulting to the dual-lipidated Shh (ShhNp). ShhNp is firmly tethered to the cell membrane where it forms multimers. Further solubilization and release from the cell surface seem to be achieved through different mechanisms, including the interaction with DISP1 and SCUBE2, movement by lipoprotein particles, transport by cellular extensions called cytonemes or by proteolytic removal of both terminal lipidated peptides. Once released, the fully processed Shh can signal within embryonic tissues both at short and long-range.</text>
</comment>
<gene>
    <name evidence="2" type="primary">SHH</name>
</gene>
<organism>
    <name type="scientific">Cynops pyrrhogaster</name>
    <name type="common">Japanese fire-bellied newt</name>
    <name type="synonym">Molge pyrrhogaster</name>
    <dbReference type="NCBI Taxonomy" id="8330"/>
    <lineage>
        <taxon>Eukaryota</taxon>
        <taxon>Metazoa</taxon>
        <taxon>Chordata</taxon>
        <taxon>Craniata</taxon>
        <taxon>Vertebrata</taxon>
        <taxon>Euteleostomi</taxon>
        <taxon>Amphibia</taxon>
        <taxon>Batrachia</taxon>
        <taxon>Caudata</taxon>
        <taxon>Salamandroidea</taxon>
        <taxon>Salamandridae</taxon>
        <taxon>Pleurodelinae</taxon>
        <taxon>Cynops</taxon>
    </lineage>
</organism>
<protein>
    <recommendedName>
        <fullName evidence="6">Sonic hedgehog protein</fullName>
        <shortName>SHH</shortName>
        <ecNumber evidence="3">3.1.-.-</ecNumber>
    </recommendedName>
    <component>
        <recommendedName>
            <fullName>Sonic hedgehog protein N-product</fullName>
            <shortName>ShhN</shortName>
        </recommendedName>
        <alternativeName>
            <fullName evidence="3">Shh N-terminal processed signaling domains</fullName>
            <shortName evidence="3">ShhNp</shortName>
        </alternativeName>
    </component>
</protein>